<keyword id="KW-1003">Cell membrane</keyword>
<keyword id="KW-1015">Disulfide bond</keyword>
<keyword id="KW-0325">Glycoprotein</keyword>
<keyword id="KW-0336">GPI-anchor</keyword>
<keyword id="KW-0449">Lipoprotein</keyword>
<keyword id="KW-0472">Membrane</keyword>
<keyword id="KW-0675">Receptor</keyword>
<keyword id="KW-1185">Reference proteome</keyword>
<keyword id="KW-0732">Signal</keyword>
<name>GFRA3_MOUSE</name>
<proteinExistence type="evidence at transcript level"/>
<reference key="1">
    <citation type="journal article" date="1998" name="Biochem. Biophys. Res. Commun.">
        <title>Molecular cloning and expression analysis of GFR alpha-3, a novel cDNA related to GDNFR alpha and NTNR-alpha.</title>
        <authorList>
            <person name="Nomoto S."/>
            <person name="Ito S."/>
            <person name="Yang L.-X."/>
            <person name="Kiuchi K."/>
        </authorList>
    </citation>
    <scope>NUCLEOTIDE SEQUENCE [MRNA]</scope>
    <source>
        <strain>C57BL/6J</strain>
        <tissue>Heart</tissue>
    </source>
</reference>
<reference key="2">
    <citation type="journal article" date="1998" name="Eur. J. Neurosci.">
        <title>GFRalpha-3, a protein related to GFRalpha-1, is expressed in developing peripheral neurons and ensheathing cells.</title>
        <authorList>
            <person name="Widenfalk J."/>
            <person name="Tomac A."/>
            <person name="Lindqvist E."/>
            <person name="Hoffer B."/>
            <person name="Olson L."/>
        </authorList>
    </citation>
    <scope>NUCLEOTIDE SEQUENCE [MRNA]</scope>
</reference>
<reference key="3">
    <citation type="journal article" date="1998" name="Proc. Natl. Acad. Sci. U.S.A.">
        <title>Expression and regulation of GFRalpha3, a glial cell line-derived neurotrophic factor family receptor.</title>
        <authorList>
            <person name="Naveilhan P."/>
            <person name="Baudet C."/>
            <person name="Mikaels A."/>
            <person name="Shen L."/>
            <person name="Westphal H."/>
            <person name="Ernfors P."/>
        </authorList>
    </citation>
    <scope>NUCLEOTIDE SEQUENCE [MRNA]</scope>
</reference>
<reference key="4">
    <citation type="journal article" date="1998" name="Proc. Natl. Acad. Sci. U.S.A.">
        <title>GFRalpha3 is an orphan member of the GDNF/neurturin/persephin receptor family.</title>
        <authorList>
            <person name="Baloh R.H."/>
            <person name="Gorodinsky A."/>
            <person name="Golden J.P."/>
            <person name="Tansey M.G."/>
            <person name="Keck C.L."/>
            <person name="Popescu N.C."/>
            <person name="Johnson E.M. Jr."/>
            <person name="Milbrandt J."/>
        </authorList>
    </citation>
    <scope>NUCLEOTIDE SEQUENCE [MRNA]</scope>
</reference>
<reference key="5">
    <citation type="journal article" date="1998" name="Mol. Cell. Neurosci.">
        <title>Multiple GPI-anchored receptors control GDNF-dependent and independent activation of the c-Ret receptor tyrosine kinase.</title>
        <authorList>
            <person name="Trupp M."/>
            <person name="Raynoschek C."/>
            <person name="Belluardo N."/>
            <person name="Ibanez C.F."/>
        </authorList>
    </citation>
    <scope>NUCLEOTIDE SEQUENCE [MRNA]</scope>
</reference>
<reference key="6">
    <citation type="journal article" date="2005" name="Science">
        <title>The transcriptional landscape of the mammalian genome.</title>
        <authorList>
            <person name="Carninci P."/>
            <person name="Kasukawa T."/>
            <person name="Katayama S."/>
            <person name="Gough J."/>
            <person name="Frith M.C."/>
            <person name="Maeda N."/>
            <person name="Oyama R."/>
            <person name="Ravasi T."/>
            <person name="Lenhard B."/>
            <person name="Wells C."/>
            <person name="Kodzius R."/>
            <person name="Shimokawa K."/>
            <person name="Bajic V.B."/>
            <person name="Brenner S.E."/>
            <person name="Batalov S."/>
            <person name="Forrest A.R."/>
            <person name="Zavolan M."/>
            <person name="Davis M.J."/>
            <person name="Wilming L.G."/>
            <person name="Aidinis V."/>
            <person name="Allen J.E."/>
            <person name="Ambesi-Impiombato A."/>
            <person name="Apweiler R."/>
            <person name="Aturaliya R.N."/>
            <person name="Bailey T.L."/>
            <person name="Bansal M."/>
            <person name="Baxter L."/>
            <person name="Beisel K.W."/>
            <person name="Bersano T."/>
            <person name="Bono H."/>
            <person name="Chalk A.M."/>
            <person name="Chiu K.P."/>
            <person name="Choudhary V."/>
            <person name="Christoffels A."/>
            <person name="Clutterbuck D.R."/>
            <person name="Crowe M.L."/>
            <person name="Dalla E."/>
            <person name="Dalrymple B.P."/>
            <person name="de Bono B."/>
            <person name="Della Gatta G."/>
            <person name="di Bernardo D."/>
            <person name="Down T."/>
            <person name="Engstrom P."/>
            <person name="Fagiolini M."/>
            <person name="Faulkner G."/>
            <person name="Fletcher C.F."/>
            <person name="Fukushima T."/>
            <person name="Furuno M."/>
            <person name="Futaki S."/>
            <person name="Gariboldi M."/>
            <person name="Georgii-Hemming P."/>
            <person name="Gingeras T.R."/>
            <person name="Gojobori T."/>
            <person name="Green R.E."/>
            <person name="Gustincich S."/>
            <person name="Harbers M."/>
            <person name="Hayashi Y."/>
            <person name="Hensch T.K."/>
            <person name="Hirokawa N."/>
            <person name="Hill D."/>
            <person name="Huminiecki L."/>
            <person name="Iacono M."/>
            <person name="Ikeo K."/>
            <person name="Iwama A."/>
            <person name="Ishikawa T."/>
            <person name="Jakt M."/>
            <person name="Kanapin A."/>
            <person name="Katoh M."/>
            <person name="Kawasawa Y."/>
            <person name="Kelso J."/>
            <person name="Kitamura H."/>
            <person name="Kitano H."/>
            <person name="Kollias G."/>
            <person name="Krishnan S.P."/>
            <person name="Kruger A."/>
            <person name="Kummerfeld S.K."/>
            <person name="Kurochkin I.V."/>
            <person name="Lareau L.F."/>
            <person name="Lazarevic D."/>
            <person name="Lipovich L."/>
            <person name="Liu J."/>
            <person name="Liuni S."/>
            <person name="McWilliam S."/>
            <person name="Madan Babu M."/>
            <person name="Madera M."/>
            <person name="Marchionni L."/>
            <person name="Matsuda H."/>
            <person name="Matsuzawa S."/>
            <person name="Miki H."/>
            <person name="Mignone F."/>
            <person name="Miyake S."/>
            <person name="Morris K."/>
            <person name="Mottagui-Tabar S."/>
            <person name="Mulder N."/>
            <person name="Nakano N."/>
            <person name="Nakauchi H."/>
            <person name="Ng P."/>
            <person name="Nilsson R."/>
            <person name="Nishiguchi S."/>
            <person name="Nishikawa S."/>
            <person name="Nori F."/>
            <person name="Ohara O."/>
            <person name="Okazaki Y."/>
            <person name="Orlando V."/>
            <person name="Pang K.C."/>
            <person name="Pavan W.J."/>
            <person name="Pavesi G."/>
            <person name="Pesole G."/>
            <person name="Petrovsky N."/>
            <person name="Piazza S."/>
            <person name="Reed J."/>
            <person name="Reid J.F."/>
            <person name="Ring B.Z."/>
            <person name="Ringwald M."/>
            <person name="Rost B."/>
            <person name="Ruan Y."/>
            <person name="Salzberg S.L."/>
            <person name="Sandelin A."/>
            <person name="Schneider C."/>
            <person name="Schoenbach C."/>
            <person name="Sekiguchi K."/>
            <person name="Semple C.A."/>
            <person name="Seno S."/>
            <person name="Sessa L."/>
            <person name="Sheng Y."/>
            <person name="Shibata Y."/>
            <person name="Shimada H."/>
            <person name="Shimada K."/>
            <person name="Silva D."/>
            <person name="Sinclair B."/>
            <person name="Sperling S."/>
            <person name="Stupka E."/>
            <person name="Sugiura K."/>
            <person name="Sultana R."/>
            <person name="Takenaka Y."/>
            <person name="Taki K."/>
            <person name="Tammoja K."/>
            <person name="Tan S.L."/>
            <person name="Tang S."/>
            <person name="Taylor M.S."/>
            <person name="Tegner J."/>
            <person name="Teichmann S.A."/>
            <person name="Ueda H.R."/>
            <person name="van Nimwegen E."/>
            <person name="Verardo R."/>
            <person name="Wei C.L."/>
            <person name="Yagi K."/>
            <person name="Yamanishi H."/>
            <person name="Zabarovsky E."/>
            <person name="Zhu S."/>
            <person name="Zimmer A."/>
            <person name="Hide W."/>
            <person name="Bult C."/>
            <person name="Grimmond S.M."/>
            <person name="Teasdale R.D."/>
            <person name="Liu E.T."/>
            <person name="Brusic V."/>
            <person name="Quackenbush J."/>
            <person name="Wahlestedt C."/>
            <person name="Mattick J.S."/>
            <person name="Hume D.A."/>
            <person name="Kai C."/>
            <person name="Sasaki D."/>
            <person name="Tomaru Y."/>
            <person name="Fukuda S."/>
            <person name="Kanamori-Katayama M."/>
            <person name="Suzuki M."/>
            <person name="Aoki J."/>
            <person name="Arakawa T."/>
            <person name="Iida J."/>
            <person name="Imamura K."/>
            <person name="Itoh M."/>
            <person name="Kato T."/>
            <person name="Kawaji H."/>
            <person name="Kawagashira N."/>
            <person name="Kawashima T."/>
            <person name="Kojima M."/>
            <person name="Kondo S."/>
            <person name="Konno H."/>
            <person name="Nakano K."/>
            <person name="Ninomiya N."/>
            <person name="Nishio T."/>
            <person name="Okada M."/>
            <person name="Plessy C."/>
            <person name="Shibata K."/>
            <person name="Shiraki T."/>
            <person name="Suzuki S."/>
            <person name="Tagami M."/>
            <person name="Waki K."/>
            <person name="Watahiki A."/>
            <person name="Okamura-Oho Y."/>
            <person name="Suzuki H."/>
            <person name="Kawai J."/>
            <person name="Hayashizaki Y."/>
        </authorList>
    </citation>
    <scope>NUCLEOTIDE SEQUENCE [LARGE SCALE MRNA]</scope>
    <source>
        <strain>C57BL/6J</strain>
        <tissue>Adrenal gland</tissue>
    </source>
</reference>
<reference key="7">
    <citation type="journal article" date="2004" name="Genome Res.">
        <title>The status, quality, and expansion of the NIH full-length cDNA project: the Mammalian Gene Collection (MGC).</title>
        <authorList>
            <consortium name="The MGC Project Team"/>
        </authorList>
    </citation>
    <scope>NUCLEOTIDE SEQUENCE [LARGE SCALE MRNA]</scope>
    <source>
        <tissue>Pancreas</tissue>
    </source>
</reference>
<dbReference type="EMBL" id="AB008833">
    <property type="protein sequence ID" value="BAA23562.1"/>
    <property type="molecule type" value="mRNA"/>
</dbReference>
<dbReference type="EMBL" id="AF041842">
    <property type="protein sequence ID" value="AAC23558.1"/>
    <property type="molecule type" value="mRNA"/>
</dbReference>
<dbReference type="EMBL" id="AF036163">
    <property type="protein sequence ID" value="AAC24468.1"/>
    <property type="molecule type" value="mRNA"/>
</dbReference>
<dbReference type="EMBL" id="AF051766">
    <property type="protein sequence ID" value="AAC24354.1"/>
    <property type="molecule type" value="mRNA"/>
</dbReference>
<dbReference type="EMBL" id="AF020305">
    <property type="protein sequence ID" value="AAB70931.1"/>
    <property type="molecule type" value="mRNA"/>
</dbReference>
<dbReference type="EMBL" id="AK046542">
    <property type="protein sequence ID" value="BAC32778.1"/>
    <property type="molecule type" value="mRNA"/>
</dbReference>
<dbReference type="EMBL" id="BC066202">
    <property type="protein sequence ID" value="AAH66202.1"/>
    <property type="molecule type" value="mRNA"/>
</dbReference>
<dbReference type="CCDS" id="CCDS29133.1"/>
<dbReference type="PIR" id="JE0082">
    <property type="entry name" value="JE0082"/>
</dbReference>
<dbReference type="RefSeq" id="NP_034410.3">
    <property type="nucleotide sequence ID" value="NM_010280.4"/>
</dbReference>
<dbReference type="SMR" id="O35118"/>
<dbReference type="BioGRID" id="199906">
    <property type="interactions" value="2"/>
</dbReference>
<dbReference type="FunCoup" id="O35118">
    <property type="interactions" value="31"/>
</dbReference>
<dbReference type="STRING" id="10090.ENSMUSP00000025224"/>
<dbReference type="GlyCosmos" id="O35118">
    <property type="glycosylation" value="3 sites, No reported glycans"/>
</dbReference>
<dbReference type="GlyGen" id="O35118">
    <property type="glycosylation" value="3 sites"/>
</dbReference>
<dbReference type="PhosphoSitePlus" id="O35118"/>
<dbReference type="PaxDb" id="10090-ENSMUSP00000025224"/>
<dbReference type="ProteomicsDB" id="267431"/>
<dbReference type="Antibodypedia" id="14907">
    <property type="antibodies" value="321 antibodies from 36 providers"/>
</dbReference>
<dbReference type="DNASU" id="14587"/>
<dbReference type="Ensembl" id="ENSMUST00000025224.9">
    <property type="protein sequence ID" value="ENSMUSP00000025224.8"/>
    <property type="gene ID" value="ENSMUSG00000024366.9"/>
</dbReference>
<dbReference type="GeneID" id="14587"/>
<dbReference type="KEGG" id="mmu:14587"/>
<dbReference type="UCSC" id="uc008ele.2">
    <property type="organism name" value="mouse"/>
</dbReference>
<dbReference type="AGR" id="MGI:1201403"/>
<dbReference type="CTD" id="2676"/>
<dbReference type="MGI" id="MGI:1201403">
    <property type="gene designation" value="Gfra3"/>
</dbReference>
<dbReference type="VEuPathDB" id="HostDB:ENSMUSG00000024366"/>
<dbReference type="eggNOG" id="ENOG502QWSW">
    <property type="taxonomic scope" value="Eukaryota"/>
</dbReference>
<dbReference type="GeneTree" id="ENSGT00940000161256"/>
<dbReference type="HOGENOM" id="CLU_040179_3_0_1"/>
<dbReference type="InParanoid" id="O35118"/>
<dbReference type="OMA" id="CNAAYQH"/>
<dbReference type="OrthoDB" id="9894700at2759"/>
<dbReference type="PhylomeDB" id="O35118"/>
<dbReference type="TreeFam" id="TF331647"/>
<dbReference type="Reactome" id="R-MMU-5673001">
    <property type="pathway name" value="RAF/MAP kinase cascade"/>
</dbReference>
<dbReference type="Reactome" id="R-MMU-8853659">
    <property type="pathway name" value="RET signaling"/>
</dbReference>
<dbReference type="BioGRID-ORCS" id="14587">
    <property type="hits" value="3 hits in 77 CRISPR screens"/>
</dbReference>
<dbReference type="PRO" id="PR:O35118"/>
<dbReference type="Proteomes" id="UP000000589">
    <property type="component" value="Chromosome 18"/>
</dbReference>
<dbReference type="RNAct" id="O35118">
    <property type="molecule type" value="protein"/>
</dbReference>
<dbReference type="Bgee" id="ENSMUSG00000024366">
    <property type="expression patterns" value="Expressed in lumbar dorsal root ganglion and 91 other cell types or tissues"/>
</dbReference>
<dbReference type="GO" id="GO:0005829">
    <property type="term" value="C:cytosol"/>
    <property type="evidence" value="ECO:0007669"/>
    <property type="project" value="Ensembl"/>
</dbReference>
<dbReference type="GO" id="GO:0009897">
    <property type="term" value="C:external side of plasma membrane"/>
    <property type="evidence" value="ECO:0000314"/>
    <property type="project" value="MGI"/>
</dbReference>
<dbReference type="GO" id="GO:0008046">
    <property type="term" value="F:axon guidance receptor activity"/>
    <property type="evidence" value="ECO:0000315"/>
    <property type="project" value="MGI"/>
</dbReference>
<dbReference type="GO" id="GO:0015026">
    <property type="term" value="F:coreceptor activity"/>
    <property type="evidence" value="ECO:0000304"/>
    <property type="project" value="MGI"/>
</dbReference>
<dbReference type="GO" id="GO:0016167">
    <property type="term" value="F:glial cell-derived neurotrophic factor receptor activity"/>
    <property type="evidence" value="ECO:0000250"/>
    <property type="project" value="UniProtKB"/>
</dbReference>
<dbReference type="GO" id="GO:0007411">
    <property type="term" value="P:axon guidance"/>
    <property type="evidence" value="ECO:0000315"/>
    <property type="project" value="MGI"/>
</dbReference>
<dbReference type="GO" id="GO:0007169">
    <property type="term" value="P:cell surface receptor protein tyrosine kinase signaling pathway"/>
    <property type="evidence" value="ECO:0000304"/>
    <property type="project" value="MGI"/>
</dbReference>
<dbReference type="GO" id="GO:0035860">
    <property type="term" value="P:glial cell-derived neurotrophic factor receptor signaling pathway"/>
    <property type="evidence" value="ECO:0000250"/>
    <property type="project" value="UniProtKB"/>
</dbReference>
<dbReference type="GO" id="GO:0048666">
    <property type="term" value="P:neuron development"/>
    <property type="evidence" value="ECO:0000315"/>
    <property type="project" value="MGI"/>
</dbReference>
<dbReference type="GO" id="GO:0001764">
    <property type="term" value="P:neuron migration"/>
    <property type="evidence" value="ECO:0000315"/>
    <property type="project" value="MGI"/>
</dbReference>
<dbReference type="GO" id="GO:0048485">
    <property type="term" value="P:sympathetic nervous system development"/>
    <property type="evidence" value="ECO:0000315"/>
    <property type="project" value="MGI"/>
</dbReference>
<dbReference type="FunFam" id="1.10.220.110:FF:000002">
    <property type="entry name" value="GDNF family receptor alpha 3"/>
    <property type="match status" value="1"/>
</dbReference>
<dbReference type="Gene3D" id="1.10.220.110">
    <property type="entry name" value="GDNF binding domain"/>
    <property type="match status" value="1"/>
</dbReference>
<dbReference type="InterPro" id="IPR016017">
    <property type="entry name" value="GDNF/GAS1"/>
</dbReference>
<dbReference type="InterPro" id="IPR037193">
    <property type="entry name" value="GDNF_alpha"/>
</dbReference>
<dbReference type="InterPro" id="IPR003438">
    <property type="entry name" value="GDNF_rcpt"/>
</dbReference>
<dbReference type="InterPro" id="IPR003505">
    <property type="entry name" value="GDNF_rcpt_A3"/>
</dbReference>
<dbReference type="PANTHER" id="PTHR10269:SF15">
    <property type="entry name" value="GDNF FAMILY RECEPTOR ALPHA-3"/>
    <property type="match status" value="1"/>
</dbReference>
<dbReference type="PANTHER" id="PTHR10269">
    <property type="entry name" value="GDNF RECEPTOR ALPHA"/>
    <property type="match status" value="1"/>
</dbReference>
<dbReference type="Pfam" id="PF02351">
    <property type="entry name" value="GDNF"/>
    <property type="match status" value="3"/>
</dbReference>
<dbReference type="PRINTS" id="PR01319">
    <property type="entry name" value="GDNFRALPHA3"/>
</dbReference>
<dbReference type="PRINTS" id="PR01316">
    <property type="entry name" value="GDNFRECEPTOR"/>
</dbReference>
<dbReference type="SMART" id="SM00907">
    <property type="entry name" value="GDNF"/>
    <property type="match status" value="3"/>
</dbReference>
<dbReference type="SUPFAM" id="SSF110035">
    <property type="entry name" value="GDNF receptor-like"/>
    <property type="match status" value="1"/>
</dbReference>
<sequence length="397" mass="44307">MGLSWSPRPPLLMILLLVLSLWLPLGAGNSLATENRFVNSCTQARKKCEANPACKAAYQHLGSCTSSLSRPLPLEESAMSADCLEAAEQLRNSSLIDCRCHRRMKHQATCLDIYWTVHPARSLGDYELDVSPYEDTVTSKPWKMNLSKLNMLKPDSDLCLKFAMLCTLHDKCDRLRKAYGEACSGIRCQRHLCLAQLRSFFEKAAESHAQGLLLCPCAPEDAGCGERRRNTIAPSCALPSVTPNCLDLRSFCRADPLCRSRLMDFQTHCHPMDILGTCATEQSRCLRAYLGLIGTAMTPNFISKVNTTVALSCTCRGSGNLQDECEQLERSFSQNPCLVEAIAAKMRFHRQLFSQDWADSTFSVVQQQNSNPALRLQPRLPILSFSILPLILLQTLW</sequence>
<gene>
    <name type="primary">Gfra3</name>
</gene>
<comment type="function">
    <text evidence="1">Receptor for artemin (ARTN), a growth factor that supports the survival of sensory and sympathetic peripheral neurons. ARTN-binding leads to autophosphorylation and activation of the RET receptor.</text>
</comment>
<comment type="subunit">
    <text evidence="1">Interacts with ARTN ligand and RET: forms a 2:2:2 ternary complex composed of ARTN ligand, GFRA3 and RET receptor. Interacts with SORL1.</text>
</comment>
<comment type="subcellular location">
    <subcellularLocation>
        <location evidence="1">Cell membrane</location>
        <topology evidence="1">Lipid-anchor</topology>
        <topology evidence="1">GPI-anchor</topology>
    </subcellularLocation>
</comment>
<comment type="similarity">
    <text evidence="4">Belongs to the GDNFR family.</text>
</comment>
<organism>
    <name type="scientific">Mus musculus</name>
    <name type="common">Mouse</name>
    <dbReference type="NCBI Taxonomy" id="10090"/>
    <lineage>
        <taxon>Eukaryota</taxon>
        <taxon>Metazoa</taxon>
        <taxon>Chordata</taxon>
        <taxon>Craniata</taxon>
        <taxon>Vertebrata</taxon>
        <taxon>Euteleostomi</taxon>
        <taxon>Mammalia</taxon>
        <taxon>Eutheria</taxon>
        <taxon>Euarchontoglires</taxon>
        <taxon>Glires</taxon>
        <taxon>Rodentia</taxon>
        <taxon>Myomorpha</taxon>
        <taxon>Muroidea</taxon>
        <taxon>Muridae</taxon>
        <taxon>Murinae</taxon>
        <taxon>Mus</taxon>
        <taxon>Mus</taxon>
    </lineage>
</organism>
<feature type="signal peptide" evidence="3">
    <location>
        <begin position="1"/>
        <end position="28"/>
    </location>
</feature>
<feature type="chain" id="PRO_0000010791" description="GDNF family receptor alpha-3">
    <location>
        <begin position="29"/>
        <end position="371"/>
    </location>
</feature>
<feature type="propeptide" id="PRO_0000010792" description="Removed in mature form" evidence="3">
    <location>
        <begin position="372"/>
        <end position="397"/>
    </location>
</feature>
<feature type="lipid moiety-binding region" description="GPI-anchor amidated asparagine" evidence="3">
    <location>
        <position position="371"/>
    </location>
</feature>
<feature type="glycosylation site" description="N-linked (GlcNAc...) asparagine" evidence="3">
    <location>
        <position position="92"/>
    </location>
</feature>
<feature type="glycosylation site" description="N-linked (GlcNAc...) asparagine" evidence="3">
    <location>
        <position position="145"/>
    </location>
</feature>
<feature type="glycosylation site" description="N-linked (GlcNAc...) asparagine" evidence="3">
    <location>
        <position position="306"/>
    </location>
</feature>
<feature type="disulfide bond" evidence="2">
    <location>
        <begin position="48"/>
        <end position="54"/>
    </location>
</feature>
<feature type="disulfide bond" evidence="1">
    <location>
        <begin position="159"/>
        <end position="215"/>
    </location>
</feature>
<feature type="disulfide bond" evidence="1">
    <location>
        <begin position="166"/>
        <end position="172"/>
    </location>
</feature>
<feature type="disulfide bond" evidence="1">
    <location>
        <begin position="183"/>
        <end position="193"/>
    </location>
</feature>
<feature type="disulfide bond" evidence="1">
    <location>
        <begin position="188"/>
        <end position="236"/>
    </location>
</feature>
<feature type="disulfide bond" evidence="1">
    <location>
        <begin position="217"/>
        <end position="224"/>
    </location>
</feature>
<feature type="disulfide bond" evidence="1">
    <location>
        <begin position="245"/>
        <end position="313"/>
    </location>
</feature>
<feature type="disulfide bond" evidence="1">
    <location>
        <begin position="252"/>
        <end position="258"/>
    </location>
</feature>
<feature type="disulfide bond" evidence="1">
    <location>
        <begin position="269"/>
        <end position="285"/>
    </location>
</feature>
<feature type="disulfide bond" evidence="1">
    <location>
        <begin position="278"/>
        <end position="337"/>
    </location>
</feature>
<feature type="disulfide bond" evidence="1">
    <location>
        <begin position="315"/>
        <end position="325"/>
    </location>
</feature>
<feature type="sequence conflict" description="In Ref. 2; AAC23558 and 3; AAC24468." evidence="4" ref="2 3">
    <original>WS</original>
    <variation>LE</variation>
    <location>
        <begin position="5"/>
        <end position="6"/>
    </location>
</feature>
<feature type="sequence conflict" description="In Ref. 6; BAC32778." evidence="4" ref="6">
    <original>S</original>
    <variation>C</variation>
    <location>
        <position position="66"/>
    </location>
</feature>
<feature type="sequence conflict" description="In Ref. 2; AAC23558, 3; AAC24468 and 5; AAB70931." evidence="4" ref="2 3 5">
    <original>A</original>
    <variation>P</variation>
    <location>
        <position position="218"/>
    </location>
</feature>
<feature type="sequence conflict" description="In Ref. 7; AAH66202." evidence="4" ref="7">
    <original>T</original>
    <variation>S</variation>
    <location>
        <position position="314"/>
    </location>
</feature>
<protein>
    <recommendedName>
        <fullName>GDNF family receptor alpha-3</fullName>
        <shortName>GDNF receptor alpha-3</shortName>
        <shortName>GDNFR-alpha-3</shortName>
        <shortName>GFR-alpha-3</shortName>
    </recommendedName>
</protein>
<evidence type="ECO:0000250" key="1">
    <source>
        <dbReference type="UniProtKB" id="O60609"/>
    </source>
</evidence>
<evidence type="ECO:0000250" key="2">
    <source>
        <dbReference type="UniProtKB" id="Q62997"/>
    </source>
</evidence>
<evidence type="ECO:0000255" key="3"/>
<evidence type="ECO:0000305" key="4"/>
<accession>O35118</accession>
<accession>O35325</accession>
<accession>O55243</accession>
<accession>Q6NZC2</accession>
<accession>Q8C8L9</accession>